<keyword id="KW-0997">Cell inner membrane</keyword>
<keyword id="KW-1003">Cell membrane</keyword>
<keyword id="KW-0472">Membrane</keyword>
<keyword id="KW-0812">Transmembrane</keyword>
<keyword id="KW-1133">Transmembrane helix</keyword>
<keyword id="KW-0813">Transport</keyword>
<protein>
    <recommendedName>
        <fullName evidence="1">Probable succinate transporter subunit YjjB</fullName>
    </recommendedName>
</protein>
<comment type="function">
    <text evidence="1">Involved in succinate export with YjjP. Both proteins are required for export.</text>
</comment>
<comment type="subunit">
    <text evidence="1">The transporter is composed of YjjB and YjjP.</text>
</comment>
<comment type="subcellular location">
    <subcellularLocation>
        <location evidence="1">Cell inner membrane</location>
        <topology evidence="1">Multi-pass membrane protein</topology>
    </subcellularLocation>
</comment>
<comment type="similarity">
    <text evidence="1">Belongs to the ThrE exporter (TC 2.A.79) family.</text>
</comment>
<comment type="sequence caution" evidence="2">
    <conflict type="erroneous initiation">
        <sequence resource="EMBL-CDS" id="ABE10472"/>
    </conflict>
</comment>
<sequence>MGVIEFLLALAQDMILAAIPAVGFAMVFNVPVRALRWCALLGAIGHGSRMILMTSGLNIEWSTFMASMLVGTIGIQWSRWYLAHPKVFTVAAVIPMFPGISAYTAMISAVKISQLGYSEPLMITLLTNFLTASSIVGALSIGLSIPGLWLYRKRPRV</sequence>
<gene>
    <name evidence="1" type="primary">yjjB</name>
    <name type="ordered locus">UTI89_C5069</name>
</gene>
<proteinExistence type="inferred from homology"/>
<accession>Q1R2E2</accession>
<name>YJJB_ECOUT</name>
<reference key="1">
    <citation type="journal article" date="2006" name="Proc. Natl. Acad. Sci. U.S.A.">
        <title>Identification of genes subject to positive selection in uropathogenic strains of Escherichia coli: a comparative genomics approach.</title>
        <authorList>
            <person name="Chen S.L."/>
            <person name="Hung C.-S."/>
            <person name="Xu J."/>
            <person name="Reigstad C.S."/>
            <person name="Magrini V."/>
            <person name="Sabo A."/>
            <person name="Blasiar D."/>
            <person name="Bieri T."/>
            <person name="Meyer R.R."/>
            <person name="Ozersky P."/>
            <person name="Armstrong J.R."/>
            <person name="Fulton R.S."/>
            <person name="Latreille J.P."/>
            <person name="Spieth J."/>
            <person name="Hooton T.M."/>
            <person name="Mardis E.R."/>
            <person name="Hultgren S.J."/>
            <person name="Gordon J.I."/>
        </authorList>
    </citation>
    <scope>NUCLEOTIDE SEQUENCE [LARGE SCALE GENOMIC DNA]</scope>
    <source>
        <strain>UTI89 / UPEC</strain>
    </source>
</reference>
<feature type="chain" id="PRO_0000293669" description="Probable succinate transporter subunit YjjB">
    <location>
        <begin position="1"/>
        <end position="157"/>
    </location>
</feature>
<feature type="transmembrane region" description="Helical" evidence="1">
    <location>
        <begin position="8"/>
        <end position="28"/>
    </location>
</feature>
<feature type="transmembrane region" description="Helical" evidence="1">
    <location>
        <begin position="50"/>
        <end position="70"/>
    </location>
</feature>
<feature type="transmembrane region" description="Helical" evidence="1">
    <location>
        <begin position="87"/>
        <end position="107"/>
    </location>
</feature>
<feature type="transmembrane region" description="Helical" evidence="1">
    <location>
        <begin position="129"/>
        <end position="149"/>
    </location>
</feature>
<dbReference type="EMBL" id="CP000243">
    <property type="protein sequence ID" value="ABE10472.1"/>
    <property type="status" value="ALT_INIT"/>
    <property type="molecule type" value="Genomic_DNA"/>
</dbReference>
<dbReference type="RefSeq" id="WP_000538188.1">
    <property type="nucleotide sequence ID" value="NZ_CP064825.1"/>
</dbReference>
<dbReference type="KEGG" id="eci:UTI89_C5069"/>
<dbReference type="HOGENOM" id="CLU_117642_1_0_6"/>
<dbReference type="Proteomes" id="UP000001952">
    <property type="component" value="Chromosome"/>
</dbReference>
<dbReference type="GO" id="GO:0005886">
    <property type="term" value="C:plasma membrane"/>
    <property type="evidence" value="ECO:0007669"/>
    <property type="project" value="UniProtKB-SubCell"/>
</dbReference>
<dbReference type="GO" id="GO:0015744">
    <property type="term" value="P:succinate transport"/>
    <property type="evidence" value="ECO:0007669"/>
    <property type="project" value="UniProtKB-UniRule"/>
</dbReference>
<dbReference type="HAMAP" id="MF_01191">
    <property type="entry name" value="YjjB"/>
    <property type="match status" value="1"/>
</dbReference>
<dbReference type="InterPro" id="IPR024528">
    <property type="entry name" value="ThrE_2"/>
</dbReference>
<dbReference type="InterPro" id="IPR050539">
    <property type="entry name" value="ThrE_Dicarb/AminoAcid_Exp"/>
</dbReference>
<dbReference type="InterPro" id="IPR020914">
    <property type="entry name" value="YjjB"/>
</dbReference>
<dbReference type="NCBIfam" id="NF007391">
    <property type="entry name" value="PRK09917.1"/>
    <property type="match status" value="1"/>
</dbReference>
<dbReference type="PANTHER" id="PTHR34390:SF1">
    <property type="entry name" value="SUCCINATE TRANSPORTER SUBUNIT YJJB-RELATED"/>
    <property type="match status" value="1"/>
</dbReference>
<dbReference type="PANTHER" id="PTHR34390">
    <property type="entry name" value="UPF0442 PROTEIN YJJB-RELATED"/>
    <property type="match status" value="1"/>
</dbReference>
<dbReference type="Pfam" id="PF12821">
    <property type="entry name" value="ThrE_2"/>
    <property type="match status" value="1"/>
</dbReference>
<organism>
    <name type="scientific">Escherichia coli (strain UTI89 / UPEC)</name>
    <dbReference type="NCBI Taxonomy" id="364106"/>
    <lineage>
        <taxon>Bacteria</taxon>
        <taxon>Pseudomonadati</taxon>
        <taxon>Pseudomonadota</taxon>
        <taxon>Gammaproteobacteria</taxon>
        <taxon>Enterobacterales</taxon>
        <taxon>Enterobacteriaceae</taxon>
        <taxon>Escherichia</taxon>
    </lineage>
</organism>
<evidence type="ECO:0000255" key="1">
    <source>
        <dbReference type="HAMAP-Rule" id="MF_01191"/>
    </source>
</evidence>
<evidence type="ECO:0000305" key="2"/>